<dbReference type="EMBL" id="AF039266">
    <property type="protein sequence ID" value="AAC33543.1"/>
    <property type="molecule type" value="Genomic_DNA"/>
</dbReference>
<dbReference type="SMR" id="P92857"/>
<dbReference type="GO" id="GO:0005743">
    <property type="term" value="C:mitochondrial inner membrane"/>
    <property type="evidence" value="ECO:0007669"/>
    <property type="project" value="UniProtKB-SubCell"/>
</dbReference>
<dbReference type="GO" id="GO:0046872">
    <property type="term" value="F:metal ion binding"/>
    <property type="evidence" value="ECO:0007669"/>
    <property type="project" value="UniProtKB-KW"/>
</dbReference>
<dbReference type="GO" id="GO:0008121">
    <property type="term" value="F:ubiquinol-cytochrome-c reductase activity"/>
    <property type="evidence" value="ECO:0007669"/>
    <property type="project" value="TreeGrafter"/>
</dbReference>
<dbReference type="GO" id="GO:0006122">
    <property type="term" value="P:mitochondrial electron transport, ubiquinol to cytochrome c"/>
    <property type="evidence" value="ECO:0007669"/>
    <property type="project" value="TreeGrafter"/>
</dbReference>
<dbReference type="CDD" id="cd00284">
    <property type="entry name" value="Cytochrome_b_N"/>
    <property type="match status" value="1"/>
</dbReference>
<dbReference type="Gene3D" id="1.20.810.10">
    <property type="entry name" value="Cytochrome Bc1 Complex, Chain C"/>
    <property type="match status" value="1"/>
</dbReference>
<dbReference type="InterPro" id="IPR005797">
    <property type="entry name" value="Cyt_b/b6_N"/>
</dbReference>
<dbReference type="InterPro" id="IPR027387">
    <property type="entry name" value="Cytb/b6-like_sf"/>
</dbReference>
<dbReference type="InterPro" id="IPR048259">
    <property type="entry name" value="Cytochrome_b_N_euk/bac"/>
</dbReference>
<dbReference type="InterPro" id="IPR016174">
    <property type="entry name" value="Di-haem_cyt_TM"/>
</dbReference>
<dbReference type="PANTHER" id="PTHR19271">
    <property type="entry name" value="CYTOCHROME B"/>
    <property type="match status" value="1"/>
</dbReference>
<dbReference type="PANTHER" id="PTHR19271:SF16">
    <property type="entry name" value="CYTOCHROME B"/>
    <property type="match status" value="1"/>
</dbReference>
<dbReference type="Pfam" id="PF00033">
    <property type="entry name" value="Cytochrome_B"/>
    <property type="match status" value="1"/>
</dbReference>
<dbReference type="SUPFAM" id="SSF81342">
    <property type="entry name" value="Transmembrane di-heme cytochromes"/>
    <property type="match status" value="1"/>
</dbReference>
<dbReference type="PROSITE" id="PS51002">
    <property type="entry name" value="CYTB_NTER"/>
    <property type="match status" value="1"/>
</dbReference>
<comment type="function">
    <text evidence="2">Component of the ubiquinol-cytochrome c reductase complex (complex III or cytochrome b-c1 complex) that is part of the mitochondrial respiratory chain. The b-c1 complex mediates electron transfer from ubiquinol to cytochrome c. Contributes to the generation of a proton gradient across the mitochondrial membrane that is then used for ATP synthesis.</text>
</comment>
<comment type="cofactor">
    <cofactor evidence="2">
        <name>heme b</name>
        <dbReference type="ChEBI" id="CHEBI:60344"/>
    </cofactor>
    <text evidence="2">Binds 2 heme b groups non-covalently.</text>
</comment>
<comment type="subunit">
    <text evidence="2">The cytochrome bc1 complex contains 3 respiratory subunits (MT-CYB, CYC1 and UQCRFS1), 2 core proteins (UQCRC1 and UQCRC2) and probably 6 low-molecular weight proteins.</text>
</comment>
<comment type="subcellular location">
    <subcellularLocation>
        <location evidence="2">Mitochondrion inner membrane</location>
        <topology evidence="2">Multi-pass membrane protein</topology>
    </subcellularLocation>
</comment>
<comment type="miscellaneous">
    <text evidence="1">Heme 1 (or BL or b562) is low-potential and absorbs at about 562 nm, and heme 2 (or BH or b566) is high-potential and absorbs at about 566 nm.</text>
</comment>
<comment type="similarity">
    <text evidence="3">Belongs to the cytochrome b family.</text>
</comment>
<comment type="caution">
    <text evidence="2">The full-length protein contains only eight transmembrane helices, not nine as predicted by bioinformatics tools.</text>
</comment>
<reference key="1">
    <citation type="journal article" date="1998" name="Mol. Phylogenet. Evol.">
        <title>Weighting and congruence: a case study based on three mitochondrial genes in pitvipers.</title>
        <authorList>
            <person name="Vidal N."/>
            <person name="Lecointre G."/>
        </authorList>
    </citation>
    <scope>NUCLEOTIDE SEQUENCE [GENOMIC DNA]</scope>
</reference>
<reference key="2">
    <citation type="journal article" date="1997" name="C. R. Acad. Sci. III, Sci. Vie">
        <title>Molecular systematics of pitvipers: paraphyly of the Bothrops complex.</title>
        <authorList>
            <person name="Vidal N."/>
            <person name="Lecointre G."/>
            <person name="Vie J.-C."/>
            <person name="Gasc J.-P."/>
        </authorList>
    </citation>
    <scope>NUCLEOTIDE SEQUENCE [GENOMIC DNA] OF 1-132</scope>
</reference>
<accession>P92857</accession>
<organism>
    <name type="scientific">Trimeresurus stejnegeri</name>
    <name type="common">Chinese green tree viper</name>
    <name type="synonym">Viridovipera stejnegeri</name>
    <dbReference type="NCBI Taxonomy" id="39682"/>
    <lineage>
        <taxon>Eukaryota</taxon>
        <taxon>Metazoa</taxon>
        <taxon>Chordata</taxon>
        <taxon>Craniata</taxon>
        <taxon>Vertebrata</taxon>
        <taxon>Euteleostomi</taxon>
        <taxon>Lepidosauria</taxon>
        <taxon>Squamata</taxon>
        <taxon>Bifurcata</taxon>
        <taxon>Unidentata</taxon>
        <taxon>Episquamata</taxon>
        <taxon>Toxicofera</taxon>
        <taxon>Serpentes</taxon>
        <taxon>Colubroidea</taxon>
        <taxon>Viperidae</taxon>
        <taxon>Crotalinae</taxon>
        <taxon>Trimeresurus</taxon>
    </lineage>
</organism>
<keyword id="KW-0249">Electron transport</keyword>
<keyword id="KW-0349">Heme</keyword>
<keyword id="KW-0408">Iron</keyword>
<keyword id="KW-0472">Membrane</keyword>
<keyword id="KW-0479">Metal-binding</keyword>
<keyword id="KW-0496">Mitochondrion</keyword>
<keyword id="KW-0999">Mitochondrion inner membrane</keyword>
<keyword id="KW-0679">Respiratory chain</keyword>
<keyword id="KW-0812">Transmembrane</keyword>
<keyword id="KW-1133">Transmembrane helix</keyword>
<keyword id="KW-0813">Transport</keyword>
<keyword id="KW-0830">Ubiquinone</keyword>
<geneLocation type="mitochondrion"/>
<sequence>YINYKNMSHQHTLMLFNLLPVGSNISTWWNFGSMLLSCSMIQIMTGFFLAIHYTANINLAFSSIIHISRDVPYGWIMQNTHAIGASLFFICIYIHIARGLYYGSYLNKEVWLSGTTLLIILMATAFFGYVLPWGQMSFWAATVITNLLTAIPYLGTTLTTWLWGGFAINDPTLTRFFALHFILPFAIISMSSIHILLLHNEGSSNPLGTNSDID</sequence>
<evidence type="ECO:0000250" key="1"/>
<evidence type="ECO:0000250" key="2">
    <source>
        <dbReference type="UniProtKB" id="P00157"/>
    </source>
</evidence>
<evidence type="ECO:0000255" key="3">
    <source>
        <dbReference type="PROSITE-ProRule" id="PRU00968"/>
    </source>
</evidence>
<name>CYB_TRIST</name>
<feature type="chain" id="PRO_0000061686" description="Cytochrome b">
    <location>
        <begin position="1" status="less than"/>
        <end position="214" status="greater than"/>
    </location>
</feature>
<feature type="transmembrane region" description="Helical" evidence="2">
    <location>
        <begin position="31"/>
        <end position="51"/>
    </location>
</feature>
<feature type="transmembrane region" description="Helical" evidence="2">
    <location>
        <begin position="75"/>
        <end position="96"/>
    </location>
</feature>
<feature type="transmembrane region" description="Helical" evidence="2">
    <location>
        <begin position="111"/>
        <end position="131"/>
    </location>
</feature>
<feature type="transmembrane region" description="Helical" evidence="3">
    <location>
        <begin position="176"/>
        <end position="196"/>
    </location>
</feature>
<feature type="binding site" description="axial binding residue" evidence="2">
    <location>
        <position position="81"/>
    </location>
    <ligand>
        <name>heme b</name>
        <dbReference type="ChEBI" id="CHEBI:60344"/>
        <label>b562</label>
    </ligand>
    <ligandPart>
        <name>Fe</name>
        <dbReference type="ChEBI" id="CHEBI:18248"/>
    </ligandPart>
</feature>
<feature type="binding site" description="axial binding residue" evidence="2">
    <location>
        <position position="95"/>
    </location>
    <ligand>
        <name>heme b</name>
        <dbReference type="ChEBI" id="CHEBI:60344"/>
        <label>b566</label>
    </ligand>
    <ligandPart>
        <name>Fe</name>
        <dbReference type="ChEBI" id="CHEBI:18248"/>
    </ligandPart>
</feature>
<feature type="binding site" description="axial binding residue" evidence="2">
    <location>
        <position position="180"/>
    </location>
    <ligand>
        <name>heme b</name>
        <dbReference type="ChEBI" id="CHEBI:60344"/>
        <label>b562</label>
    </ligand>
    <ligandPart>
        <name>Fe</name>
        <dbReference type="ChEBI" id="CHEBI:18248"/>
    </ligandPart>
</feature>
<feature type="binding site" description="axial binding residue" evidence="2">
    <location>
        <position position="194"/>
    </location>
    <ligand>
        <name>heme b</name>
        <dbReference type="ChEBI" id="CHEBI:60344"/>
        <label>b566</label>
    </ligand>
    <ligandPart>
        <name>Fe</name>
        <dbReference type="ChEBI" id="CHEBI:18248"/>
    </ligandPart>
</feature>
<feature type="binding site" evidence="2">
    <location>
        <position position="199"/>
    </location>
    <ligand>
        <name>a ubiquinone</name>
        <dbReference type="ChEBI" id="CHEBI:16389"/>
    </ligand>
</feature>
<feature type="non-terminal residue">
    <location>
        <position position="1"/>
    </location>
</feature>
<feature type="non-terminal residue">
    <location>
        <position position="214"/>
    </location>
</feature>
<proteinExistence type="inferred from homology"/>
<protein>
    <recommendedName>
        <fullName>Cytochrome b</fullName>
    </recommendedName>
    <alternativeName>
        <fullName>Complex III subunit 3</fullName>
    </alternativeName>
    <alternativeName>
        <fullName>Complex III subunit III</fullName>
    </alternativeName>
    <alternativeName>
        <fullName>Cytochrome b-c1 complex subunit 3</fullName>
    </alternativeName>
    <alternativeName>
        <fullName>Ubiquinol-cytochrome-c reductase complex cytochrome b subunit</fullName>
    </alternativeName>
</protein>
<gene>
    <name type="primary">MT-CYB</name>
    <name type="synonym">COB</name>
    <name type="synonym">CYTB</name>
    <name type="synonym">MTCYB</name>
</gene>